<feature type="chain" id="PRO_0000243949" description="Uncharacterized mitochondrial carrier YPR011C">
    <location>
        <begin position="1"/>
        <end position="326"/>
    </location>
</feature>
<feature type="transmembrane region" description="Helical; Name=1" evidence="1">
    <location>
        <begin position="24"/>
        <end position="40"/>
    </location>
</feature>
<feature type="transmembrane region" description="Helical; Name=2" evidence="1">
    <location>
        <begin position="84"/>
        <end position="104"/>
    </location>
</feature>
<feature type="transmembrane region" description="Helical; Name=3" evidence="1">
    <location>
        <begin position="126"/>
        <end position="143"/>
    </location>
</feature>
<feature type="transmembrane region" description="Helical; Name=4" evidence="1">
    <location>
        <begin position="195"/>
        <end position="213"/>
    </location>
</feature>
<feature type="transmembrane region" description="Helical; Name=5" evidence="1">
    <location>
        <begin position="237"/>
        <end position="254"/>
    </location>
</feature>
<feature type="transmembrane region" description="Helical; Name=6" evidence="1">
    <location>
        <begin position="297"/>
        <end position="316"/>
    </location>
</feature>
<feature type="repeat" description="Solcar 1">
    <location>
        <begin position="20"/>
        <end position="107"/>
    </location>
</feature>
<feature type="repeat" description="Solcar 2">
    <location>
        <begin position="120"/>
        <end position="219"/>
    </location>
</feature>
<feature type="repeat" description="Solcar 3">
    <location>
        <begin position="231"/>
        <end position="322"/>
    </location>
</feature>
<sequence length="326" mass="35913">MAEVLTVLEQPNSIKDFLKQDSNIAFLAGGVAGAVSRTVVSPFERVKILLQVQSSTTSYNRGIFSSIRQVYHEEGTKGLFRGNGLNCIRIFPYSAVQFVVYEACKKKLFHVNGNNGQEQLTNTQRLFSGALCGGCSVVATYPLDLIKTRLSIQTANLSSLNRSKAKSISKPPGIWQLLSETYRLEGGLRGLYRGVWPTSLGVVPYVALNFAVYEQLREFGVNSSDAQPSWKSNLYKLTIGAISGGVAQTITYPFDLLRRRFQVLAMGGNELGFRYTSVWDALVTIGRAEGVSGYYKGLAANLFKVVPSTAVSWLVYEVVCDSVRNW</sequence>
<proteinExistence type="evidence at protein level"/>
<comment type="subcellular location">
    <subcellularLocation>
        <location evidence="2 3">Mitochondrion inner membrane</location>
        <topology evidence="2 3">Multi-pass membrane protein</topology>
    </subcellularLocation>
</comment>
<comment type="similarity">
    <text evidence="4">Belongs to the mitochondrial carrier (TC 2.A.29) family.</text>
</comment>
<protein>
    <recommendedName>
        <fullName>Uncharacterized mitochondrial carrier YPR011C</fullName>
    </recommendedName>
</protein>
<gene>
    <name type="ordered locus">YPR011C</name>
    <name type="ORF">LPZ11C</name>
    <name type="ORF">YP9531.04C</name>
</gene>
<organism>
    <name type="scientific">Saccharomyces cerevisiae (strain ATCC 204508 / S288c)</name>
    <name type="common">Baker's yeast</name>
    <dbReference type="NCBI Taxonomy" id="559292"/>
    <lineage>
        <taxon>Eukaryota</taxon>
        <taxon>Fungi</taxon>
        <taxon>Dikarya</taxon>
        <taxon>Ascomycota</taxon>
        <taxon>Saccharomycotina</taxon>
        <taxon>Saccharomycetes</taxon>
        <taxon>Saccharomycetales</taxon>
        <taxon>Saccharomycetaceae</taxon>
        <taxon>Saccharomyces</taxon>
    </lineage>
</organism>
<dbReference type="EMBL" id="U31900">
    <property type="protein sequence ID" value="AAA97590.1"/>
    <property type="molecule type" value="Genomic_DNA"/>
</dbReference>
<dbReference type="EMBL" id="Z49919">
    <property type="protein sequence ID" value="CAA90155.1"/>
    <property type="molecule type" value="Genomic_DNA"/>
</dbReference>
<dbReference type="EMBL" id="Z71255">
    <property type="protein sequence ID" value="CAA95008.1"/>
    <property type="molecule type" value="Genomic_DNA"/>
</dbReference>
<dbReference type="EMBL" id="BK006949">
    <property type="protein sequence ID" value="DAA11439.1"/>
    <property type="molecule type" value="Genomic_DNA"/>
</dbReference>
<dbReference type="PIR" id="S57544">
    <property type="entry name" value="S57544"/>
</dbReference>
<dbReference type="SMR" id="Q12251"/>
<dbReference type="BioGRID" id="36190">
    <property type="interactions" value="50"/>
</dbReference>
<dbReference type="DIP" id="DIP-1553N"/>
<dbReference type="FunCoup" id="Q12251">
    <property type="interactions" value="419"/>
</dbReference>
<dbReference type="IntAct" id="Q12251">
    <property type="interactions" value="2"/>
</dbReference>
<dbReference type="MINT" id="Q12251"/>
<dbReference type="STRING" id="4932.YPR011C"/>
<dbReference type="TCDB" id="2.A.29.23.9">
    <property type="family name" value="the mitochondrial carrier (mc) family"/>
</dbReference>
<dbReference type="PaxDb" id="4932-YPR011C"/>
<dbReference type="PeptideAtlas" id="Q12251"/>
<dbReference type="EnsemblFungi" id="YPR011C_mRNA">
    <property type="protein sequence ID" value="YPR011C"/>
    <property type="gene ID" value="YPR011C"/>
</dbReference>
<dbReference type="KEGG" id="sce:YPR011C"/>
<dbReference type="AGR" id="SGD:S000006215"/>
<dbReference type="SGD" id="S000006215">
    <property type="gene designation" value="YPR011C"/>
</dbReference>
<dbReference type="VEuPathDB" id="FungiDB:YPR011C"/>
<dbReference type="eggNOG" id="KOG0752">
    <property type="taxonomic scope" value="Eukaryota"/>
</dbReference>
<dbReference type="HOGENOM" id="CLU_015166_10_1_1"/>
<dbReference type="InParanoid" id="Q12251"/>
<dbReference type="OMA" id="YKMSVPK"/>
<dbReference type="OrthoDB" id="270584at2759"/>
<dbReference type="BioCyc" id="YEAST:G3O-34173-MONOMER"/>
<dbReference type="BioGRID-ORCS" id="856121">
    <property type="hits" value="0 hits in 10 CRISPR screens"/>
</dbReference>
<dbReference type="PRO" id="PR:Q12251"/>
<dbReference type="Proteomes" id="UP000002311">
    <property type="component" value="Chromosome XVI"/>
</dbReference>
<dbReference type="RNAct" id="Q12251">
    <property type="molecule type" value="protein"/>
</dbReference>
<dbReference type="GO" id="GO:0005743">
    <property type="term" value="C:mitochondrial inner membrane"/>
    <property type="evidence" value="ECO:0007669"/>
    <property type="project" value="UniProtKB-SubCell"/>
</dbReference>
<dbReference type="GO" id="GO:0005739">
    <property type="term" value="C:mitochondrion"/>
    <property type="evidence" value="ECO:0007005"/>
    <property type="project" value="SGD"/>
</dbReference>
<dbReference type="GO" id="GO:0046964">
    <property type="term" value="F:3'-phosphoadenosine 5'-phosphosulfate transmembrane transporter activity"/>
    <property type="evidence" value="ECO:0000314"/>
    <property type="project" value="SGD"/>
</dbReference>
<dbReference type="GO" id="GO:1902557">
    <property type="term" value="F:5'-adenylyl sulfate transmembrane transporter activity"/>
    <property type="evidence" value="ECO:0000314"/>
    <property type="project" value="SGD"/>
</dbReference>
<dbReference type="GO" id="GO:0015215">
    <property type="term" value="F:nucleotide transmembrane transporter activity"/>
    <property type="evidence" value="ECO:0000318"/>
    <property type="project" value="GO_Central"/>
</dbReference>
<dbReference type="GO" id="GO:1902559">
    <property type="term" value="P:3'-phospho-5'-adenylyl sulfate transmembrane transport"/>
    <property type="evidence" value="ECO:0000314"/>
    <property type="project" value="SGD"/>
</dbReference>
<dbReference type="GO" id="GO:1902558">
    <property type="term" value="P:5'-adenylyl sulfate transmembrane transport"/>
    <property type="evidence" value="ECO:0000314"/>
    <property type="project" value="SGD"/>
</dbReference>
<dbReference type="GO" id="GO:0051503">
    <property type="term" value="P:adenine nucleotide transport"/>
    <property type="evidence" value="ECO:0000318"/>
    <property type="project" value="GO_Central"/>
</dbReference>
<dbReference type="FunFam" id="1.50.40.10:FF:000186">
    <property type="entry name" value="YPR011Cp-like protein"/>
    <property type="match status" value="1"/>
</dbReference>
<dbReference type="Gene3D" id="1.50.40.10">
    <property type="entry name" value="Mitochondrial carrier domain"/>
    <property type="match status" value="1"/>
</dbReference>
<dbReference type="InterPro" id="IPR002067">
    <property type="entry name" value="Mit_carrier"/>
</dbReference>
<dbReference type="InterPro" id="IPR018108">
    <property type="entry name" value="Mitochondrial_sb/sol_carrier"/>
</dbReference>
<dbReference type="InterPro" id="IPR023395">
    <property type="entry name" value="Mt_carrier_dom_sf"/>
</dbReference>
<dbReference type="PANTHER" id="PTHR24089">
    <property type="entry name" value="SOLUTE CARRIER FAMILY 25"/>
    <property type="match status" value="1"/>
</dbReference>
<dbReference type="Pfam" id="PF00153">
    <property type="entry name" value="Mito_carr"/>
    <property type="match status" value="3"/>
</dbReference>
<dbReference type="PRINTS" id="PR00926">
    <property type="entry name" value="MITOCARRIER"/>
</dbReference>
<dbReference type="SUPFAM" id="SSF103506">
    <property type="entry name" value="Mitochondrial carrier"/>
    <property type="match status" value="1"/>
</dbReference>
<dbReference type="PROSITE" id="PS50920">
    <property type="entry name" value="SOLCAR"/>
    <property type="match status" value="3"/>
</dbReference>
<keyword id="KW-0472">Membrane</keyword>
<keyword id="KW-0496">Mitochondrion</keyword>
<keyword id="KW-0999">Mitochondrion inner membrane</keyword>
<keyword id="KW-1185">Reference proteome</keyword>
<keyword id="KW-0677">Repeat</keyword>
<keyword id="KW-0812">Transmembrane</keyword>
<keyword id="KW-1133">Transmembrane helix</keyword>
<keyword id="KW-0813">Transport</keyword>
<name>YP011_YEAST</name>
<accession>Q12251</accession>
<accession>D6W423</accession>
<reference key="1">
    <citation type="journal article" date="1997" name="Nature">
        <title>The nucleotide sequence of Saccharomyces cerevisiae chromosome XVI.</title>
        <authorList>
            <person name="Bussey H."/>
            <person name="Storms R.K."/>
            <person name="Ahmed A."/>
            <person name="Albermann K."/>
            <person name="Allen E."/>
            <person name="Ansorge W."/>
            <person name="Araujo R."/>
            <person name="Aparicio A."/>
            <person name="Barrell B.G."/>
            <person name="Badcock K."/>
            <person name="Benes V."/>
            <person name="Botstein D."/>
            <person name="Bowman S."/>
            <person name="Brueckner M."/>
            <person name="Carpenter J."/>
            <person name="Cherry J.M."/>
            <person name="Chung E."/>
            <person name="Churcher C.M."/>
            <person name="Coster F."/>
            <person name="Davis K."/>
            <person name="Davis R.W."/>
            <person name="Dietrich F.S."/>
            <person name="Delius H."/>
            <person name="DiPaolo T."/>
            <person name="Dubois E."/>
            <person name="Duesterhoeft A."/>
            <person name="Duncan M."/>
            <person name="Floeth M."/>
            <person name="Fortin N."/>
            <person name="Friesen J.D."/>
            <person name="Fritz C."/>
            <person name="Goffeau A."/>
            <person name="Hall J."/>
            <person name="Hebling U."/>
            <person name="Heumann K."/>
            <person name="Hilbert H."/>
            <person name="Hillier L.W."/>
            <person name="Hunicke-Smith S."/>
            <person name="Hyman R.W."/>
            <person name="Johnston M."/>
            <person name="Kalman S."/>
            <person name="Kleine K."/>
            <person name="Komp C."/>
            <person name="Kurdi O."/>
            <person name="Lashkari D."/>
            <person name="Lew H."/>
            <person name="Lin A."/>
            <person name="Lin D."/>
            <person name="Louis E.J."/>
            <person name="Marathe R."/>
            <person name="Messenguy F."/>
            <person name="Mewes H.-W."/>
            <person name="Mirtipati S."/>
            <person name="Moestl D."/>
            <person name="Mueller-Auer S."/>
            <person name="Namath A."/>
            <person name="Nentwich U."/>
            <person name="Oefner P."/>
            <person name="Pearson D."/>
            <person name="Petel F.X."/>
            <person name="Pohl T.M."/>
            <person name="Purnelle B."/>
            <person name="Rajandream M.A."/>
            <person name="Rechmann S."/>
            <person name="Rieger M."/>
            <person name="Riles L."/>
            <person name="Roberts D."/>
            <person name="Schaefer M."/>
            <person name="Scharfe M."/>
            <person name="Scherens B."/>
            <person name="Schramm S."/>
            <person name="Schroeder M."/>
            <person name="Sdicu A.-M."/>
            <person name="Tettelin H."/>
            <person name="Urrestarazu L.A."/>
            <person name="Ushinsky S."/>
            <person name="Vierendeels F."/>
            <person name="Vissers S."/>
            <person name="Voss H."/>
            <person name="Walsh S.V."/>
            <person name="Wambutt R."/>
            <person name="Wang Y."/>
            <person name="Wedler E."/>
            <person name="Wedler H."/>
            <person name="Winnett E."/>
            <person name="Zhong W.-W."/>
            <person name="Zollner A."/>
            <person name="Vo D.H."/>
            <person name="Hani J."/>
        </authorList>
    </citation>
    <scope>NUCLEOTIDE SEQUENCE [LARGE SCALE GENOMIC DNA]</scope>
    <source>
        <strain>ATCC 204508 / S288c</strain>
    </source>
</reference>
<reference key="2">
    <citation type="journal article" date="2014" name="G3 (Bethesda)">
        <title>The reference genome sequence of Saccharomyces cerevisiae: Then and now.</title>
        <authorList>
            <person name="Engel S.R."/>
            <person name="Dietrich F.S."/>
            <person name="Fisk D.G."/>
            <person name="Binkley G."/>
            <person name="Balakrishnan R."/>
            <person name="Costanzo M.C."/>
            <person name="Dwight S.S."/>
            <person name="Hitz B.C."/>
            <person name="Karra K."/>
            <person name="Nash R.S."/>
            <person name="Weng S."/>
            <person name="Wong E.D."/>
            <person name="Lloyd P."/>
            <person name="Skrzypek M.S."/>
            <person name="Miyasato S.R."/>
            <person name="Simison M."/>
            <person name="Cherry J.M."/>
        </authorList>
    </citation>
    <scope>GENOME REANNOTATION</scope>
    <source>
        <strain>ATCC 204508 / S288c</strain>
    </source>
</reference>
<reference key="3">
    <citation type="journal article" date="2003" name="Nature">
        <title>Global analysis of protein localization in budding yeast.</title>
        <authorList>
            <person name="Huh W.-K."/>
            <person name="Falvo J.V."/>
            <person name="Gerke L.C."/>
            <person name="Carroll A.S."/>
            <person name="Howson R.W."/>
            <person name="Weissman J.S."/>
            <person name="O'Shea E.K."/>
        </authorList>
    </citation>
    <scope>SUBCELLULAR LOCATION [LARGE SCALE ANALYSIS]</scope>
</reference>
<reference key="4">
    <citation type="journal article" date="2006" name="J. Proteome Res.">
        <title>Toward the complete yeast mitochondrial proteome: multidimensional separation techniques for mitochondrial proteomics.</title>
        <authorList>
            <person name="Reinders J."/>
            <person name="Zahedi R.P."/>
            <person name="Pfanner N."/>
            <person name="Meisinger C."/>
            <person name="Sickmann A."/>
        </authorList>
    </citation>
    <scope>SUBCELLULAR LOCATION [LARGE SCALE ANALYSIS]</scope>
    <scope>IDENTIFICATION BY MASS SPECTROMETRY</scope>
</reference>
<evidence type="ECO:0000255" key="1"/>
<evidence type="ECO:0000269" key="2">
    <source>
    </source>
</evidence>
<evidence type="ECO:0000269" key="3">
    <source>
    </source>
</evidence>
<evidence type="ECO:0000305" key="4"/>